<protein>
    <recommendedName>
        <fullName>Phosphate-specific transport system accessory protein PhoU homolog</fullName>
        <shortName>Pst system accessory protein PhoU homolog</shortName>
    </recommendedName>
</protein>
<proteinExistence type="inferred from homology"/>
<comment type="function">
    <text evidence="1">Plays a role in the regulation of phosphate uptake.</text>
</comment>
<comment type="subunit">
    <text evidence="1">Homodimer.</text>
</comment>
<comment type="subcellular location">
    <subcellularLocation>
        <location evidence="1">Cytoplasm</location>
    </subcellularLocation>
</comment>
<comment type="similarity">
    <text evidence="2">Belongs to the PhoU family.</text>
</comment>
<name>PHOU_XYLFT</name>
<gene>
    <name type="primary">phoU</name>
    <name type="ordered locus">PD_1206</name>
</gene>
<evidence type="ECO:0000250" key="1"/>
<evidence type="ECO:0000305" key="2"/>
<accession>Q87C87</accession>
<dbReference type="EMBL" id="AE009442">
    <property type="protein sequence ID" value="AAO29057.1"/>
    <property type="molecule type" value="Genomic_DNA"/>
</dbReference>
<dbReference type="RefSeq" id="WP_004086097.1">
    <property type="nucleotide sequence ID" value="NC_004556.1"/>
</dbReference>
<dbReference type="SMR" id="Q87C87"/>
<dbReference type="KEGG" id="xft:PD_1206"/>
<dbReference type="HOGENOM" id="CLU_078518_2_1_6"/>
<dbReference type="Proteomes" id="UP000002516">
    <property type="component" value="Chromosome"/>
</dbReference>
<dbReference type="GO" id="GO:0005737">
    <property type="term" value="C:cytoplasm"/>
    <property type="evidence" value="ECO:0000250"/>
    <property type="project" value="UniProtKB"/>
</dbReference>
<dbReference type="GO" id="GO:0042803">
    <property type="term" value="F:protein homodimerization activity"/>
    <property type="evidence" value="ECO:0000250"/>
    <property type="project" value="UniProtKB"/>
</dbReference>
<dbReference type="GO" id="GO:0030643">
    <property type="term" value="P:intracellular phosphate ion homeostasis"/>
    <property type="evidence" value="ECO:0007669"/>
    <property type="project" value="InterPro"/>
</dbReference>
<dbReference type="GO" id="GO:0045936">
    <property type="term" value="P:negative regulation of phosphate metabolic process"/>
    <property type="evidence" value="ECO:0000250"/>
    <property type="project" value="UniProtKB"/>
</dbReference>
<dbReference type="GO" id="GO:2000186">
    <property type="term" value="P:negative regulation of phosphate transmembrane transport"/>
    <property type="evidence" value="ECO:0000250"/>
    <property type="project" value="UniProtKB"/>
</dbReference>
<dbReference type="GO" id="GO:0006817">
    <property type="term" value="P:phosphate ion transport"/>
    <property type="evidence" value="ECO:0007669"/>
    <property type="project" value="UniProtKB-KW"/>
</dbReference>
<dbReference type="FunFam" id="1.20.58.220:FF:000004">
    <property type="entry name" value="Phosphate-specific transport system accessory protein PhoU"/>
    <property type="match status" value="1"/>
</dbReference>
<dbReference type="Gene3D" id="1.20.58.220">
    <property type="entry name" value="Phosphate transport system protein phou homolog 2, domain 2"/>
    <property type="match status" value="1"/>
</dbReference>
<dbReference type="InterPro" id="IPR028366">
    <property type="entry name" value="P_transport_PhoU"/>
</dbReference>
<dbReference type="InterPro" id="IPR038078">
    <property type="entry name" value="PhoU-like_sf"/>
</dbReference>
<dbReference type="InterPro" id="IPR026022">
    <property type="entry name" value="PhoU_dom"/>
</dbReference>
<dbReference type="NCBIfam" id="TIGR02135">
    <property type="entry name" value="phoU_full"/>
    <property type="match status" value="1"/>
</dbReference>
<dbReference type="PANTHER" id="PTHR42930">
    <property type="entry name" value="PHOSPHATE-SPECIFIC TRANSPORT SYSTEM ACCESSORY PROTEIN PHOU"/>
    <property type="match status" value="1"/>
</dbReference>
<dbReference type="PANTHER" id="PTHR42930:SF3">
    <property type="entry name" value="PHOSPHATE-SPECIFIC TRANSPORT SYSTEM ACCESSORY PROTEIN PHOU"/>
    <property type="match status" value="1"/>
</dbReference>
<dbReference type="Pfam" id="PF01895">
    <property type="entry name" value="PhoU"/>
    <property type="match status" value="2"/>
</dbReference>
<dbReference type="PIRSF" id="PIRSF003107">
    <property type="entry name" value="PhoU"/>
    <property type="match status" value="1"/>
</dbReference>
<dbReference type="SUPFAM" id="SSF109755">
    <property type="entry name" value="PhoU-like"/>
    <property type="match status" value="1"/>
</dbReference>
<keyword id="KW-0963">Cytoplasm</keyword>
<keyword id="KW-0592">Phosphate transport</keyword>
<keyword id="KW-1185">Reference proteome</keyword>
<keyword id="KW-0813">Transport</keyword>
<sequence length="240" mass="27001">MNSSYNHHIVKSYDDELNRLVTEIIRMGEIAVAQLEAALDVVERRDDKAADRIVMNDEAIDALEQSISHEVMRLALRGPMARDLREILAGLRIPADIERIGDYAANVAKRSIALNTMPPLPQTASLRALGQLSAQAVRNSLLSYSNKDEQIATNVRENDARLDAQYTALFRELLTYMMEDTRNITPCIHLLFMAKNLERIGDHATNIAENVLFLLNGEQMLPPREKCDNTSNVNLDCILD</sequence>
<organism>
    <name type="scientific">Xylella fastidiosa (strain Temecula1 / ATCC 700964)</name>
    <dbReference type="NCBI Taxonomy" id="183190"/>
    <lineage>
        <taxon>Bacteria</taxon>
        <taxon>Pseudomonadati</taxon>
        <taxon>Pseudomonadota</taxon>
        <taxon>Gammaproteobacteria</taxon>
        <taxon>Lysobacterales</taxon>
        <taxon>Lysobacteraceae</taxon>
        <taxon>Xylella</taxon>
    </lineage>
</organism>
<reference key="1">
    <citation type="journal article" date="2003" name="J. Bacteriol.">
        <title>Comparative analyses of the complete genome sequences of Pierce's disease and citrus variegated chlorosis strains of Xylella fastidiosa.</title>
        <authorList>
            <person name="Van Sluys M.A."/>
            <person name="de Oliveira M.C."/>
            <person name="Monteiro-Vitorello C.B."/>
            <person name="Miyaki C.Y."/>
            <person name="Furlan L.R."/>
            <person name="Camargo L.E.A."/>
            <person name="da Silva A.C.R."/>
            <person name="Moon D.H."/>
            <person name="Takita M.A."/>
            <person name="Lemos E.G.M."/>
            <person name="Machado M.A."/>
            <person name="Ferro M.I.T."/>
            <person name="da Silva F.R."/>
            <person name="Goldman M.H.S."/>
            <person name="Goldman G.H."/>
            <person name="Lemos M.V.F."/>
            <person name="El-Dorry H."/>
            <person name="Tsai S.M."/>
            <person name="Carrer H."/>
            <person name="Carraro D.M."/>
            <person name="de Oliveira R.C."/>
            <person name="Nunes L.R."/>
            <person name="Siqueira W.J."/>
            <person name="Coutinho L.L."/>
            <person name="Kimura E.T."/>
            <person name="Ferro E.S."/>
            <person name="Harakava R."/>
            <person name="Kuramae E.E."/>
            <person name="Marino C.L."/>
            <person name="Giglioti E."/>
            <person name="Abreu I.L."/>
            <person name="Alves L.M.C."/>
            <person name="do Amaral A.M."/>
            <person name="Baia G.S."/>
            <person name="Blanco S.R."/>
            <person name="Brito M.S."/>
            <person name="Cannavan F.S."/>
            <person name="Celestino A.V."/>
            <person name="da Cunha A.F."/>
            <person name="Fenille R.C."/>
            <person name="Ferro J.A."/>
            <person name="Formighieri E.F."/>
            <person name="Kishi L.T."/>
            <person name="Leoni S.G."/>
            <person name="Oliveira A.R."/>
            <person name="Rosa V.E. Jr."/>
            <person name="Sassaki F.T."/>
            <person name="Sena J.A.D."/>
            <person name="de Souza A.A."/>
            <person name="Truffi D."/>
            <person name="Tsukumo F."/>
            <person name="Yanai G.M."/>
            <person name="Zaros L.G."/>
            <person name="Civerolo E.L."/>
            <person name="Simpson A.J.G."/>
            <person name="Almeida N.F. Jr."/>
            <person name="Setubal J.C."/>
            <person name="Kitajima J.P."/>
        </authorList>
    </citation>
    <scope>NUCLEOTIDE SEQUENCE [LARGE SCALE GENOMIC DNA]</scope>
    <source>
        <strain>Temecula1 / ATCC 700964</strain>
    </source>
</reference>
<feature type="chain" id="PRO_0000155185" description="Phosphate-specific transport system accessory protein PhoU homolog">
    <location>
        <begin position="1"/>
        <end position="240"/>
    </location>
</feature>